<keyword id="KW-0067">ATP-binding</keyword>
<keyword id="KW-1003">Cell membrane</keyword>
<keyword id="KW-0325">Glycoprotein</keyword>
<keyword id="KW-0418">Kinase</keyword>
<keyword id="KW-0433">Leucine-rich repeat</keyword>
<keyword id="KW-0472">Membrane</keyword>
<keyword id="KW-0547">Nucleotide-binding</keyword>
<keyword id="KW-0597">Phosphoprotein</keyword>
<keyword id="KW-0675">Receptor</keyword>
<keyword id="KW-1185">Reference proteome</keyword>
<keyword id="KW-0677">Repeat</keyword>
<keyword id="KW-0723">Serine/threonine-protein kinase</keyword>
<keyword id="KW-0732">Signal</keyword>
<keyword id="KW-0808">Transferase</keyword>
<keyword id="KW-0812">Transmembrane</keyword>
<keyword id="KW-1133">Transmembrane helix</keyword>
<dbReference type="EC" id="2.7.11.1"/>
<dbReference type="EMBL" id="AB005234">
    <property type="protein sequence ID" value="BAB10464.1"/>
    <property type="status" value="ALT_SEQ"/>
    <property type="molecule type" value="Genomic_DNA"/>
</dbReference>
<dbReference type="EMBL" id="CP002688">
    <property type="protein sequence ID" value="AED97788.1"/>
    <property type="molecule type" value="Genomic_DNA"/>
</dbReference>
<dbReference type="EMBL" id="AY060554">
    <property type="protein sequence ID" value="AAL31184.1"/>
    <property type="molecule type" value="mRNA"/>
</dbReference>
<dbReference type="EMBL" id="AY142025">
    <property type="protein sequence ID" value="AAM98289.1"/>
    <property type="molecule type" value="mRNA"/>
</dbReference>
<dbReference type="EMBL" id="FJ708813">
    <property type="protein sequence ID" value="ACN59404.1"/>
    <property type="molecule type" value="mRNA"/>
</dbReference>
<dbReference type="RefSeq" id="NP_001330851.1">
    <property type="nucleotide sequence ID" value="NM_001345607.1"/>
</dbReference>
<dbReference type="RefSeq" id="NP_001330852.1">
    <property type="nucleotide sequence ID" value="NM_001345605.1"/>
</dbReference>
<dbReference type="RefSeq" id="NP_568977.1">
    <property type="nucleotide sequence ID" value="NM_125766.3"/>
</dbReference>
<dbReference type="SMR" id="Q8W4S5"/>
<dbReference type="BioGRID" id="21733">
    <property type="interactions" value="82"/>
</dbReference>
<dbReference type="FunCoup" id="Q8W4S5">
    <property type="interactions" value="88"/>
</dbReference>
<dbReference type="IntAct" id="Q8W4S5">
    <property type="interactions" value="100"/>
</dbReference>
<dbReference type="STRING" id="3702.Q8W4S5"/>
<dbReference type="GlyGen" id="Q8W4S5">
    <property type="glycosylation" value="4 sites"/>
</dbReference>
<dbReference type="PaxDb" id="3702-AT5G63710.1"/>
<dbReference type="ProteomicsDB" id="243112"/>
<dbReference type="EnsemblPlants" id="AT5G63710.1">
    <property type="protein sequence ID" value="AT5G63710.1"/>
    <property type="gene ID" value="AT5G63710"/>
</dbReference>
<dbReference type="GeneID" id="836491"/>
<dbReference type="Gramene" id="AT5G63710.1">
    <property type="protein sequence ID" value="AT5G63710.1"/>
    <property type="gene ID" value="AT5G63710"/>
</dbReference>
<dbReference type="KEGG" id="ath:AT5G63710"/>
<dbReference type="Araport" id="AT5G63710"/>
<dbReference type="TAIR" id="AT5G63710"/>
<dbReference type="eggNOG" id="ENOG502QPJ2">
    <property type="taxonomic scope" value="Eukaryota"/>
</dbReference>
<dbReference type="HOGENOM" id="CLU_000288_92_8_1"/>
<dbReference type="InParanoid" id="Q8W4S5"/>
<dbReference type="PhylomeDB" id="Q8W4S5"/>
<dbReference type="PRO" id="PR:Q8W4S5"/>
<dbReference type="Proteomes" id="UP000006548">
    <property type="component" value="Chromosome 5"/>
</dbReference>
<dbReference type="ExpressionAtlas" id="Q8W4S5">
    <property type="expression patterns" value="baseline and differential"/>
</dbReference>
<dbReference type="GO" id="GO:0005886">
    <property type="term" value="C:plasma membrane"/>
    <property type="evidence" value="ECO:0007669"/>
    <property type="project" value="UniProtKB-SubCell"/>
</dbReference>
<dbReference type="GO" id="GO:0005524">
    <property type="term" value="F:ATP binding"/>
    <property type="evidence" value="ECO:0007669"/>
    <property type="project" value="UniProtKB-KW"/>
</dbReference>
<dbReference type="GO" id="GO:0106310">
    <property type="term" value="F:protein serine kinase activity"/>
    <property type="evidence" value="ECO:0007669"/>
    <property type="project" value="RHEA"/>
</dbReference>
<dbReference type="GO" id="GO:0004674">
    <property type="term" value="F:protein serine/threonine kinase activity"/>
    <property type="evidence" value="ECO:0007669"/>
    <property type="project" value="UniProtKB-KW"/>
</dbReference>
<dbReference type="FunFam" id="3.80.10.10:FF:000493">
    <property type="entry name" value="Probable LRR receptor-like serine/threonine-protein kinase At5g63710"/>
    <property type="match status" value="1"/>
</dbReference>
<dbReference type="FunFam" id="3.30.200.20:FF:000015">
    <property type="entry name" value="Somatic embryogenesis receptor kinase 1"/>
    <property type="match status" value="1"/>
</dbReference>
<dbReference type="FunFam" id="1.10.510.10:FF:000016">
    <property type="entry name" value="Somatic embryogenesis receptor-like kinase 1"/>
    <property type="match status" value="1"/>
</dbReference>
<dbReference type="Gene3D" id="3.30.200.20">
    <property type="entry name" value="Phosphorylase Kinase, domain 1"/>
    <property type="match status" value="1"/>
</dbReference>
<dbReference type="Gene3D" id="3.80.10.10">
    <property type="entry name" value="Ribonuclease Inhibitor"/>
    <property type="match status" value="1"/>
</dbReference>
<dbReference type="Gene3D" id="1.10.510.10">
    <property type="entry name" value="Transferase(Phosphotransferase) domain 1"/>
    <property type="match status" value="1"/>
</dbReference>
<dbReference type="InterPro" id="IPR011009">
    <property type="entry name" value="Kinase-like_dom_sf"/>
</dbReference>
<dbReference type="InterPro" id="IPR001611">
    <property type="entry name" value="Leu-rich_rpt"/>
</dbReference>
<dbReference type="InterPro" id="IPR032675">
    <property type="entry name" value="LRR_dom_sf"/>
</dbReference>
<dbReference type="InterPro" id="IPR013210">
    <property type="entry name" value="LRR_N_plant-typ"/>
</dbReference>
<dbReference type="InterPro" id="IPR051824">
    <property type="entry name" value="LRR_Rcpt-Like_S/T_Kinase"/>
</dbReference>
<dbReference type="InterPro" id="IPR000719">
    <property type="entry name" value="Prot_kinase_dom"/>
</dbReference>
<dbReference type="InterPro" id="IPR017441">
    <property type="entry name" value="Protein_kinase_ATP_BS"/>
</dbReference>
<dbReference type="InterPro" id="IPR001245">
    <property type="entry name" value="Ser-Thr/Tyr_kinase_cat_dom"/>
</dbReference>
<dbReference type="InterPro" id="IPR008271">
    <property type="entry name" value="Ser/Thr_kinase_AS"/>
</dbReference>
<dbReference type="PANTHER" id="PTHR48006">
    <property type="entry name" value="LEUCINE-RICH REPEAT-CONTAINING PROTEIN DDB_G0281931-RELATED"/>
    <property type="match status" value="1"/>
</dbReference>
<dbReference type="Pfam" id="PF13855">
    <property type="entry name" value="LRR_8"/>
    <property type="match status" value="1"/>
</dbReference>
<dbReference type="Pfam" id="PF08263">
    <property type="entry name" value="LRRNT_2"/>
    <property type="match status" value="1"/>
</dbReference>
<dbReference type="Pfam" id="PF07714">
    <property type="entry name" value="PK_Tyr_Ser-Thr"/>
    <property type="match status" value="1"/>
</dbReference>
<dbReference type="SMART" id="SM00220">
    <property type="entry name" value="S_TKc"/>
    <property type="match status" value="1"/>
</dbReference>
<dbReference type="SUPFAM" id="SSF52058">
    <property type="entry name" value="L domain-like"/>
    <property type="match status" value="1"/>
</dbReference>
<dbReference type="SUPFAM" id="SSF56112">
    <property type="entry name" value="Protein kinase-like (PK-like)"/>
    <property type="match status" value="1"/>
</dbReference>
<dbReference type="PROSITE" id="PS51450">
    <property type="entry name" value="LRR"/>
    <property type="match status" value="3"/>
</dbReference>
<dbReference type="PROSITE" id="PS00107">
    <property type="entry name" value="PROTEIN_KINASE_ATP"/>
    <property type="match status" value="1"/>
</dbReference>
<dbReference type="PROSITE" id="PS50011">
    <property type="entry name" value="PROTEIN_KINASE_DOM"/>
    <property type="match status" value="1"/>
</dbReference>
<dbReference type="PROSITE" id="PS00108">
    <property type="entry name" value="PROTEIN_KINASE_ST"/>
    <property type="match status" value="1"/>
</dbReference>
<protein>
    <recommendedName>
        <fullName>Probable LRR receptor-like serine/threonine-protein kinase At5g63710</fullName>
        <ecNumber>2.7.11.1</ecNumber>
    </recommendedName>
</protein>
<evidence type="ECO:0000250" key="1">
    <source>
        <dbReference type="UniProtKB" id="Q94AG2"/>
    </source>
</evidence>
<evidence type="ECO:0000250" key="2">
    <source>
        <dbReference type="UniProtKB" id="Q94F62"/>
    </source>
</evidence>
<evidence type="ECO:0000250" key="3">
    <source>
        <dbReference type="UniProtKB" id="Q9LSI9"/>
    </source>
</evidence>
<evidence type="ECO:0000255" key="4"/>
<evidence type="ECO:0000255" key="5">
    <source>
        <dbReference type="PROSITE-ProRule" id="PRU00159"/>
    </source>
</evidence>
<evidence type="ECO:0000255" key="6">
    <source>
        <dbReference type="PROSITE-ProRule" id="PRU10027"/>
    </source>
</evidence>
<evidence type="ECO:0000305" key="7"/>
<sequence>MAHSGNGESFHDPLRGFIQRNCFRWNNQKLILQCFMALAFVGITSSTTQPDIEGGALLQLRDSLNDSSNRLKWTRDFVSPCYSWSYVTCRGQSVVALNLASSGFTGTLSPAITKLKFLVTLELQNNSLSGALPDSLGNMVNLQTLNLSVNSFSGSIPASWSQLSNLKHLDLSSNNLTGSIPTQFFSIPTFDFSGTQLICGKSLNQPCSSSSRLPVTSSKKKLRDITLTASCVASIILFLGAMVMYHHHRVRRTKYDIFFDVAGEDDRKISFGQLKRFSLREIQLATDSFNESNLIGQGGFGKVYRGLLPDKTKVAVKRLADYFSPGGEAAFQREIQLISVAVHKNLLRLIGFCTTSSERILVYPYMENLSVAYRLRDLKAGEEGLDWPTRKRVAFGSAHGLEYLHEHCNPKIIHRDLKAANILLDNNFEPVLGDFGLAKLVDTSLTHVTTQVRGTMGHIAPEYLCTGKSSEKTDVFGYGITLLELVTGQRAIDFSRLEEEENILLLDHIKKLLREQRLRDIVDSNLTTYDSKEVETIVQVALLCTQGSPEDRPAMSEVVKMLQGTGGLAEKWTEWEQLEEVRNKEALLLPTLPATWDEEETTVDQESIRLSTAR</sequence>
<comment type="catalytic activity">
    <reaction>
        <text>L-seryl-[protein] + ATP = O-phospho-L-seryl-[protein] + ADP + H(+)</text>
        <dbReference type="Rhea" id="RHEA:17989"/>
        <dbReference type="Rhea" id="RHEA-COMP:9863"/>
        <dbReference type="Rhea" id="RHEA-COMP:11604"/>
        <dbReference type="ChEBI" id="CHEBI:15378"/>
        <dbReference type="ChEBI" id="CHEBI:29999"/>
        <dbReference type="ChEBI" id="CHEBI:30616"/>
        <dbReference type="ChEBI" id="CHEBI:83421"/>
        <dbReference type="ChEBI" id="CHEBI:456216"/>
        <dbReference type="EC" id="2.7.11.1"/>
    </reaction>
</comment>
<comment type="catalytic activity">
    <reaction>
        <text>L-threonyl-[protein] + ATP = O-phospho-L-threonyl-[protein] + ADP + H(+)</text>
        <dbReference type="Rhea" id="RHEA:46608"/>
        <dbReference type="Rhea" id="RHEA-COMP:11060"/>
        <dbReference type="Rhea" id="RHEA-COMP:11605"/>
        <dbReference type="ChEBI" id="CHEBI:15378"/>
        <dbReference type="ChEBI" id="CHEBI:30013"/>
        <dbReference type="ChEBI" id="CHEBI:30616"/>
        <dbReference type="ChEBI" id="CHEBI:61977"/>
        <dbReference type="ChEBI" id="CHEBI:456216"/>
        <dbReference type="EC" id="2.7.11.1"/>
    </reaction>
</comment>
<comment type="interaction">
    <interactant intactId="EBI-16934827">
        <id>Q8W4S5</id>
    </interactant>
    <interactant intactId="EBI-20657508">
        <id>A0A178WK49</id>
        <label>At1g62950</label>
    </interactant>
    <organismsDiffer>false</organismsDiffer>
    <experiments>4</experiments>
</comment>
<comment type="interaction">
    <interactant intactId="EBI-16934827">
        <id>Q8W4S5</id>
    </interactant>
    <interactant intactId="EBI-20657656">
        <id>C0LGH8</id>
        <label>At1g63430</label>
    </interactant>
    <organismsDiffer>false</organismsDiffer>
    <experiments>3</experiments>
</comment>
<comment type="interaction">
    <interactant intactId="EBI-16934827">
        <id>Q8W4S5</id>
    </interactant>
    <interactant intactId="EBI-17121194">
        <id>Q8LFN2</id>
        <label>At3g03770</label>
    </interactant>
    <organismsDiffer>false</organismsDiffer>
    <experiments>2</experiments>
</comment>
<comment type="interaction">
    <interactant intactId="EBI-16934827">
        <id>Q8W4S5</id>
    </interactant>
    <interactant intactId="EBI-20664802">
        <id>Q9SNA3</id>
        <label>At3g46340</label>
    </interactant>
    <organismsDiffer>false</organismsDiffer>
    <experiments>3</experiments>
</comment>
<comment type="interaction">
    <interactant intactId="EBI-16934827">
        <id>Q8W4S5</id>
    </interactant>
    <interactant intactId="EBI-20665764">
        <id>A0A178V0F6</id>
        <label>At4g20790</label>
    </interactant>
    <organismsDiffer>false</organismsDiffer>
    <experiments>3</experiments>
</comment>
<comment type="interaction">
    <interactant intactId="EBI-16934827">
        <id>Q8W4S5</id>
    </interactant>
    <interactant intactId="EBI-20654480">
        <id>C0LGR6</id>
        <label>At4g29180</label>
    </interactant>
    <organismsDiffer>false</organismsDiffer>
    <experiments>2</experiments>
</comment>
<comment type="interaction">
    <interactant intactId="EBI-16934827">
        <id>Q8W4S5</id>
    </interactant>
    <interactant intactId="EBI-16955335">
        <id>C0LGS3</id>
        <label>At4g37250</label>
    </interactant>
    <organismsDiffer>false</organismsDiffer>
    <experiments>3</experiments>
</comment>
<comment type="interaction">
    <interactant intactId="EBI-16934827">
        <id>Q8W4S5</id>
    </interactant>
    <interactant intactId="EBI-16954237">
        <id>C0LGT5</id>
        <label>At5g16900</label>
    </interactant>
    <organismsDiffer>false</organismsDiffer>
    <experiments>2</experiments>
</comment>
<comment type="interaction">
    <interactant intactId="EBI-16934827">
        <id>Q8W4S5</id>
    </interactant>
    <interactant intactId="EBI-20661217">
        <id>C0LGU1</id>
        <label>At5g37450</label>
    </interactant>
    <organismsDiffer>false</organismsDiffer>
    <experiments>3</experiments>
</comment>
<comment type="interaction">
    <interactant intactId="EBI-16934827">
        <id>Q8W4S5</id>
    </interactant>
    <interactant intactId="EBI-20661274">
        <id>A0A178UAF6</id>
        <label>AXX17_At5g67350</label>
    </interactant>
    <organismsDiffer>false</organismsDiffer>
    <experiments>2</experiments>
</comment>
<comment type="interaction">
    <interactant intactId="EBI-16934827">
        <id>Q8W4S5</id>
    </interactant>
    <interactant intactId="EBI-1392485">
        <id>Q9LY03</id>
        <label>IRK</label>
    </interactant>
    <organismsDiffer>false</organismsDiffer>
    <experiments>2</experiments>
</comment>
<comment type="interaction">
    <interactant intactId="EBI-16934827">
        <id>Q8W4S5</id>
    </interactant>
    <interactant intactId="EBI-20662530">
        <id>O22178</id>
        <label>LRR-RLK</label>
    </interactant>
    <organismsDiffer>false</organismsDiffer>
    <experiments>2</experiments>
</comment>
<comment type="interaction">
    <interactant intactId="EBI-16934827">
        <id>Q8W4S5</id>
    </interactant>
    <interactant intactId="EBI-20663701">
        <id>C0LGP2</id>
        <label>MEE39</label>
    </interactant>
    <organismsDiffer>false</organismsDiffer>
    <experiments>2</experiments>
</comment>
<comment type="interaction">
    <interactant intactId="EBI-16934827">
        <id>Q8W4S5</id>
    </interactant>
    <interactant intactId="EBI-15588112">
        <id>Q9SSL9</id>
        <label>PEPR1</label>
    </interactant>
    <organismsDiffer>false</organismsDiffer>
    <experiments>5</experiments>
</comment>
<comment type="interaction">
    <interactant intactId="EBI-16934827">
        <id>Q8W4S5</id>
    </interactant>
    <interactant intactId="EBI-20652612">
        <id>Q9FZ59</id>
        <label>PEPR2</label>
    </interactant>
    <organismsDiffer>false</organismsDiffer>
    <experiments>2</experiments>
</comment>
<comment type="interaction">
    <interactant intactId="EBI-16934827">
        <id>Q8W4S5</id>
    </interactant>
    <interactant intactId="EBI-16902047">
        <id>Q9FN37</id>
        <label>PSKR2</label>
    </interactant>
    <organismsDiffer>false</organismsDiffer>
    <experiments>2</experiments>
</comment>
<comment type="interaction">
    <interactant intactId="EBI-16934827">
        <id>Q8W4S5</id>
    </interactant>
    <interactant intactId="EBI-20651307">
        <id>F4I2N7-2</id>
        <label>RLK7</label>
    </interactant>
    <organismsDiffer>false</organismsDiffer>
    <experiments>2</experiments>
</comment>
<comment type="interaction">
    <interactant intactId="EBI-16934827">
        <id>Q8W4S5</id>
    </interactant>
    <interactant intactId="EBI-20654648">
        <id>Q9XGZ2</id>
        <label>T1N24.22</label>
    </interactant>
    <organismsDiffer>false</organismsDiffer>
    <experiments>4</experiments>
</comment>
<comment type="interaction">
    <interactant intactId="EBI-16934827">
        <id>Q8W4S5</id>
    </interactant>
    <interactant intactId="EBI-16896864">
        <id>Q9SIT1</id>
        <label>TMK3</label>
    </interactant>
    <organismsDiffer>false</organismsDiffer>
    <experiments>3</experiments>
</comment>
<comment type="interaction">
    <interactant intactId="EBI-16934827">
        <id>Q8W4S5</id>
    </interactant>
    <interactant intactId="EBI-20658163">
        <id>Q8GY50</id>
        <label>VRLK1</label>
    </interactant>
    <organismsDiffer>false</organismsDiffer>
    <experiments>2</experiments>
</comment>
<comment type="subcellular location">
    <subcellularLocation>
        <location>Cell membrane</location>
        <topology>Single-pass type I membrane protein</topology>
    </subcellularLocation>
</comment>
<comment type="similarity">
    <text evidence="5">Belongs to the protein kinase superfamily. Ser/Thr protein kinase family.</text>
</comment>
<comment type="sequence caution" evidence="7">
    <conflict type="erroneous gene model prediction">
        <sequence resource="EMBL-CDS" id="BAB10464"/>
    </conflict>
</comment>
<proteinExistence type="evidence at protein level"/>
<gene>
    <name type="ordered locus">At5g63710</name>
    <name type="ORF">MBK5.19</name>
</gene>
<accession>Q8W4S5</accession>
<accession>Q9FFP3</accession>
<organism>
    <name type="scientific">Arabidopsis thaliana</name>
    <name type="common">Mouse-ear cress</name>
    <dbReference type="NCBI Taxonomy" id="3702"/>
    <lineage>
        <taxon>Eukaryota</taxon>
        <taxon>Viridiplantae</taxon>
        <taxon>Streptophyta</taxon>
        <taxon>Embryophyta</taxon>
        <taxon>Tracheophyta</taxon>
        <taxon>Spermatophyta</taxon>
        <taxon>Magnoliopsida</taxon>
        <taxon>eudicotyledons</taxon>
        <taxon>Gunneridae</taxon>
        <taxon>Pentapetalae</taxon>
        <taxon>rosids</taxon>
        <taxon>malvids</taxon>
        <taxon>Brassicales</taxon>
        <taxon>Brassicaceae</taxon>
        <taxon>Camelineae</taxon>
        <taxon>Arabidopsis</taxon>
    </lineage>
</organism>
<name>Y5371_ARATH</name>
<reference key="1">
    <citation type="journal article" date="1997" name="DNA Res.">
        <title>Structural analysis of Arabidopsis thaliana chromosome 5. I. Sequence features of the 1.6 Mb regions covered by twenty physically assigned P1 clones.</title>
        <authorList>
            <person name="Sato S."/>
            <person name="Kotani H."/>
            <person name="Nakamura Y."/>
            <person name="Kaneko T."/>
            <person name="Asamizu E."/>
            <person name="Fukami M."/>
            <person name="Miyajima N."/>
            <person name="Tabata S."/>
        </authorList>
    </citation>
    <scope>NUCLEOTIDE SEQUENCE [LARGE SCALE GENOMIC DNA]</scope>
    <source>
        <strain>cv. Columbia</strain>
    </source>
</reference>
<reference key="2">
    <citation type="journal article" date="2017" name="Plant J.">
        <title>Araport11: a complete reannotation of the Arabidopsis thaliana reference genome.</title>
        <authorList>
            <person name="Cheng C.Y."/>
            <person name="Krishnakumar V."/>
            <person name="Chan A.P."/>
            <person name="Thibaud-Nissen F."/>
            <person name="Schobel S."/>
            <person name="Town C.D."/>
        </authorList>
    </citation>
    <scope>GENOME REANNOTATION</scope>
    <source>
        <strain>cv. Columbia</strain>
    </source>
</reference>
<reference key="3">
    <citation type="journal article" date="2003" name="Science">
        <title>Empirical analysis of transcriptional activity in the Arabidopsis genome.</title>
        <authorList>
            <person name="Yamada K."/>
            <person name="Lim J."/>
            <person name="Dale J.M."/>
            <person name="Chen H."/>
            <person name="Shinn P."/>
            <person name="Palm C.J."/>
            <person name="Southwick A.M."/>
            <person name="Wu H.C."/>
            <person name="Kim C.J."/>
            <person name="Nguyen M."/>
            <person name="Pham P.K."/>
            <person name="Cheuk R.F."/>
            <person name="Karlin-Newmann G."/>
            <person name="Liu S.X."/>
            <person name="Lam B."/>
            <person name="Sakano H."/>
            <person name="Wu T."/>
            <person name="Yu G."/>
            <person name="Miranda M."/>
            <person name="Quach H.L."/>
            <person name="Tripp M."/>
            <person name="Chang C.H."/>
            <person name="Lee J.M."/>
            <person name="Toriumi M.J."/>
            <person name="Chan M.M."/>
            <person name="Tang C.C."/>
            <person name="Onodera C.S."/>
            <person name="Deng J.M."/>
            <person name="Akiyama K."/>
            <person name="Ansari Y."/>
            <person name="Arakawa T."/>
            <person name="Banh J."/>
            <person name="Banno F."/>
            <person name="Bowser L."/>
            <person name="Brooks S.Y."/>
            <person name="Carninci P."/>
            <person name="Chao Q."/>
            <person name="Choy N."/>
            <person name="Enju A."/>
            <person name="Goldsmith A.D."/>
            <person name="Gurjal M."/>
            <person name="Hansen N.F."/>
            <person name="Hayashizaki Y."/>
            <person name="Johnson-Hopson C."/>
            <person name="Hsuan V.W."/>
            <person name="Iida K."/>
            <person name="Karnes M."/>
            <person name="Khan S."/>
            <person name="Koesema E."/>
            <person name="Ishida J."/>
            <person name="Jiang P.X."/>
            <person name="Jones T."/>
            <person name="Kawai J."/>
            <person name="Kamiya A."/>
            <person name="Meyers C."/>
            <person name="Nakajima M."/>
            <person name="Narusaka M."/>
            <person name="Seki M."/>
            <person name="Sakurai T."/>
            <person name="Satou M."/>
            <person name="Tamse R."/>
            <person name="Vaysberg M."/>
            <person name="Wallender E.K."/>
            <person name="Wong C."/>
            <person name="Yamamura Y."/>
            <person name="Yuan S."/>
            <person name="Shinozaki K."/>
            <person name="Davis R.W."/>
            <person name="Theologis A."/>
            <person name="Ecker J.R."/>
        </authorList>
    </citation>
    <scope>NUCLEOTIDE SEQUENCE [LARGE SCALE MRNA]</scope>
    <source>
        <strain>cv. Columbia</strain>
    </source>
</reference>
<reference key="4">
    <citation type="journal article" date="2010" name="BMC Genomics">
        <title>Genome-wide cloning and sequence analysis of leucine-rich repeat receptor-like protein kinase genes in Arabidopsis thaliana.</title>
        <authorList>
            <person name="Gou X."/>
            <person name="He K."/>
            <person name="Yang H."/>
            <person name="Yuan T."/>
            <person name="Lin H."/>
            <person name="Clouse S.D."/>
            <person name="Li J."/>
        </authorList>
    </citation>
    <scope>NUCLEOTIDE SEQUENCE [LARGE SCALE MRNA]</scope>
    <source>
        <strain>cv. Columbia</strain>
    </source>
</reference>
<feature type="signal peptide" evidence="4">
    <location>
        <begin position="1"/>
        <end position="50"/>
    </location>
</feature>
<feature type="chain" id="PRO_0000409730" description="Probable LRR receptor-like serine/threonine-protein kinase At5g63710">
    <location>
        <begin position="51"/>
        <end position="614"/>
    </location>
</feature>
<feature type="topological domain" description="Extracellular" evidence="4">
    <location>
        <begin position="51"/>
        <end position="224"/>
    </location>
</feature>
<feature type="transmembrane region" description="Helical" evidence="4">
    <location>
        <begin position="225"/>
        <end position="245"/>
    </location>
</feature>
<feature type="topological domain" description="Cytoplasmic" evidence="4">
    <location>
        <begin position="246"/>
        <end position="613"/>
    </location>
</feature>
<feature type="repeat" description="LRR 1">
    <location>
        <begin position="115"/>
        <end position="139"/>
    </location>
</feature>
<feature type="repeat" description="LRR 2">
    <location>
        <begin position="141"/>
        <end position="163"/>
    </location>
</feature>
<feature type="repeat" description="LRR 3">
    <location>
        <begin position="164"/>
        <end position="187"/>
    </location>
</feature>
<feature type="domain" description="Protein kinase" evidence="5">
    <location>
        <begin position="289"/>
        <end position="573"/>
    </location>
</feature>
<feature type="active site" description="Proton acceptor" evidence="5 6">
    <location>
        <position position="416"/>
    </location>
</feature>
<feature type="binding site" evidence="5">
    <location>
        <begin position="295"/>
        <end position="303"/>
    </location>
    <ligand>
        <name>ATP</name>
        <dbReference type="ChEBI" id="CHEBI:30616"/>
    </ligand>
</feature>
<feature type="binding site" evidence="5">
    <location>
        <position position="317"/>
    </location>
    <ligand>
        <name>ATP</name>
        <dbReference type="ChEBI" id="CHEBI:30616"/>
    </ligand>
</feature>
<feature type="modified residue" description="Phosphothreonine" evidence="3">
    <location>
        <position position="286"/>
    </location>
</feature>
<feature type="modified residue" description="Phosphothreonine" evidence="2">
    <location>
        <position position="312"/>
    </location>
</feature>
<feature type="modified residue" description="Phosphoserine" evidence="1">
    <location>
        <position position="370"/>
    </location>
</feature>
<feature type="modified residue" description="Phosphothreonine" evidence="1">
    <location>
        <position position="389"/>
    </location>
</feature>
<feature type="modified residue" description="Phosphothreonine" evidence="2">
    <location>
        <position position="449"/>
    </location>
</feature>
<feature type="modified residue" description="Phosphothreonine" evidence="2">
    <location>
        <position position="450"/>
    </location>
</feature>
<feature type="modified residue" description="Phosphothreonine" evidence="2">
    <location>
        <position position="455"/>
    </location>
</feature>
<feature type="modified residue" description="Phosphotyrosine" evidence="1">
    <location>
        <position position="463"/>
    </location>
</feature>
<feature type="modified residue" description="Phosphothreonine" evidence="1">
    <location>
        <position position="466"/>
    </location>
</feature>
<feature type="modified residue" description="Phosphoserine" evidence="1">
    <location>
        <position position="470"/>
    </location>
</feature>
<feature type="modified residue" description="Phosphothreonine" evidence="1">
    <location>
        <position position="545"/>
    </location>
</feature>
<feature type="glycosylation site" description="N-linked (GlcNAc...) asparagine" evidence="4">
    <location>
        <position position="65"/>
    </location>
</feature>
<feature type="glycosylation site" description="N-linked (GlcNAc...) asparagine" evidence="4">
    <location>
        <position position="125"/>
    </location>
</feature>
<feature type="glycosylation site" description="N-linked (GlcNAc...) asparagine" evidence="4">
    <location>
        <position position="146"/>
    </location>
</feature>
<feature type="glycosylation site" description="N-linked (GlcNAc...) asparagine" evidence="4">
    <location>
        <position position="175"/>
    </location>
</feature>